<reference key="1">
    <citation type="journal article" date="2008" name="J. Proteomics">
        <title>Membrane-bound class III peroxidases: identification, biochemical properties and sequence analysis of isoenzymes purified from maize (Zea mays L.) roots.</title>
        <authorList>
            <person name="Mika A."/>
            <person name="Buck F."/>
            <person name="Luethje S."/>
        </authorList>
    </citation>
    <scope>NUCLEOTIDE SEQUENCE [MRNA]</scope>
    <source>
        <strain>cv. B73</strain>
    </source>
</reference>
<name>PER42_MAIZE</name>
<feature type="signal peptide" evidence="1">
    <location>
        <begin position="1"/>
        <end position="29"/>
    </location>
</feature>
<feature type="chain" id="PRO_0000359404" description="Peroxidase 42">
    <location>
        <begin position="30"/>
        <end position="321"/>
    </location>
</feature>
<feature type="active site" description="Proton acceptor" evidence="2 3">
    <location>
        <position position="71"/>
    </location>
</feature>
<feature type="binding site" evidence="2">
    <location>
        <position position="72"/>
    </location>
    <ligand>
        <name>Ca(2+)</name>
        <dbReference type="ChEBI" id="CHEBI:29108"/>
        <label>1</label>
    </ligand>
</feature>
<feature type="binding site" evidence="2">
    <location>
        <position position="75"/>
    </location>
    <ligand>
        <name>Ca(2+)</name>
        <dbReference type="ChEBI" id="CHEBI:29108"/>
        <label>1</label>
    </ligand>
</feature>
<feature type="binding site" evidence="2">
    <location>
        <position position="77"/>
    </location>
    <ligand>
        <name>Ca(2+)</name>
        <dbReference type="ChEBI" id="CHEBI:29108"/>
        <label>1</label>
    </ligand>
</feature>
<feature type="binding site" evidence="2">
    <location>
        <position position="79"/>
    </location>
    <ligand>
        <name>Ca(2+)</name>
        <dbReference type="ChEBI" id="CHEBI:29108"/>
        <label>1</label>
    </ligand>
</feature>
<feature type="binding site" evidence="2">
    <location>
        <position position="81"/>
    </location>
    <ligand>
        <name>Ca(2+)</name>
        <dbReference type="ChEBI" id="CHEBI:29108"/>
        <label>1</label>
    </ligand>
</feature>
<feature type="binding site" evidence="2">
    <location>
        <position position="165"/>
    </location>
    <ligand>
        <name>substrate</name>
    </ligand>
</feature>
<feature type="binding site" description="axial binding residue" evidence="2">
    <location>
        <position position="195"/>
    </location>
    <ligand>
        <name>heme b</name>
        <dbReference type="ChEBI" id="CHEBI:60344"/>
    </ligand>
    <ligandPart>
        <name>Fe</name>
        <dbReference type="ChEBI" id="CHEBI:18248"/>
    </ligandPart>
</feature>
<feature type="binding site" evidence="2">
    <location>
        <position position="196"/>
    </location>
    <ligand>
        <name>Ca(2+)</name>
        <dbReference type="ChEBI" id="CHEBI:29108"/>
        <label>2</label>
    </ligand>
</feature>
<feature type="binding site" evidence="2">
    <location>
        <position position="239"/>
    </location>
    <ligand>
        <name>Ca(2+)</name>
        <dbReference type="ChEBI" id="CHEBI:29108"/>
        <label>2</label>
    </ligand>
</feature>
<feature type="binding site" evidence="2">
    <location>
        <position position="242"/>
    </location>
    <ligand>
        <name>Ca(2+)</name>
        <dbReference type="ChEBI" id="CHEBI:29108"/>
        <label>2</label>
    </ligand>
</feature>
<feature type="binding site" evidence="2">
    <location>
        <position position="247"/>
    </location>
    <ligand>
        <name>Ca(2+)</name>
        <dbReference type="ChEBI" id="CHEBI:29108"/>
        <label>2</label>
    </ligand>
</feature>
<feature type="site" description="Transition state stabilizer" evidence="2">
    <location>
        <position position="67"/>
    </location>
</feature>
<feature type="modified residue" description="Pyrrolidone carboxylic acid" evidence="2">
    <location>
        <position position="30"/>
    </location>
</feature>
<feature type="glycosylation site" description="N-linked (GlcNAc...) asparagine" evidence="1">
    <location>
        <position position="85"/>
    </location>
</feature>
<feature type="glycosylation site" description="N-linked (GlcNAc...) asparagine" evidence="1">
    <location>
        <position position="96"/>
    </location>
</feature>
<feature type="glycosylation site" description="N-linked (GlcNAc...) asparagine" evidence="1">
    <location>
        <position position="211"/>
    </location>
</feature>
<feature type="glycosylation site" description="N-linked (GlcNAc...) asparagine" evidence="1">
    <location>
        <position position="270"/>
    </location>
</feature>
<feature type="disulfide bond" evidence="2">
    <location>
        <begin position="40"/>
        <end position="118"/>
    </location>
</feature>
<feature type="disulfide bond" evidence="2">
    <location>
        <begin position="73"/>
        <end position="78"/>
    </location>
</feature>
<feature type="disulfide bond" evidence="2">
    <location>
        <begin position="124"/>
        <end position="315"/>
    </location>
</feature>
<feature type="disulfide bond" evidence="2">
    <location>
        <begin position="202"/>
        <end position="227"/>
    </location>
</feature>
<comment type="function">
    <text>Removal of H(2)O(2), oxidation of toxic reductants, biosynthesis and degradation of lignin, suberization, auxin catabolism, response to environmental stresses such as wounding, pathogen attack and oxidative stress. These functions might be dependent on each isozyme/isoform in each plant tissue.</text>
</comment>
<comment type="catalytic activity">
    <reaction>
        <text>2 a phenolic donor + H2O2 = 2 a phenolic radical donor + 2 H2O</text>
        <dbReference type="Rhea" id="RHEA:56136"/>
        <dbReference type="ChEBI" id="CHEBI:15377"/>
        <dbReference type="ChEBI" id="CHEBI:16240"/>
        <dbReference type="ChEBI" id="CHEBI:139520"/>
        <dbReference type="ChEBI" id="CHEBI:139521"/>
        <dbReference type="EC" id="1.11.1.7"/>
    </reaction>
</comment>
<comment type="cofactor">
    <cofactor evidence="2">
        <name>heme b</name>
        <dbReference type="ChEBI" id="CHEBI:60344"/>
    </cofactor>
    <text evidence="2">Binds 1 heme b (iron(II)-protoporphyrin IX) group per subunit.</text>
</comment>
<comment type="cofactor">
    <cofactor evidence="2">
        <name>Ca(2+)</name>
        <dbReference type="ChEBI" id="CHEBI:29108"/>
    </cofactor>
    <text evidence="2">Binds 2 calcium ions per subunit.</text>
</comment>
<comment type="subcellular location">
    <subcellularLocation>
        <location evidence="4">Secreted</location>
    </subcellularLocation>
</comment>
<comment type="similarity">
    <text evidence="2">Belongs to the peroxidase family. Classical plant (class III) peroxidase subfamily.</text>
</comment>
<gene>
    <name type="primary">PER42</name>
    <name type="synonym">POX3-1</name>
    <name type="synonym">PRX42</name>
</gene>
<dbReference type="EC" id="1.11.1.7"/>
<dbReference type="EMBL" id="EF059718">
    <property type="protein sequence ID" value="ABN48844.1"/>
    <property type="molecule type" value="mRNA"/>
</dbReference>
<dbReference type="RefSeq" id="NP_001106019.1">
    <property type="nucleotide sequence ID" value="NM_001112549.1"/>
</dbReference>
<dbReference type="SMR" id="A5H453"/>
<dbReference type="STRING" id="4577.A5H453"/>
<dbReference type="PeroxiBase" id="738">
    <property type="entry name" value="ZmPrx42"/>
</dbReference>
<dbReference type="GlyCosmos" id="A5H453">
    <property type="glycosylation" value="4 sites, No reported glycans"/>
</dbReference>
<dbReference type="PaxDb" id="4577-GRMZM2G126261_P04"/>
<dbReference type="eggNOG" id="ENOG502QU1K">
    <property type="taxonomic scope" value="Eukaryota"/>
</dbReference>
<dbReference type="InParanoid" id="A5H453"/>
<dbReference type="Proteomes" id="UP000007305">
    <property type="component" value="Unplaced"/>
</dbReference>
<dbReference type="ExpressionAtlas" id="A5H453">
    <property type="expression patterns" value="baseline and differential"/>
</dbReference>
<dbReference type="GO" id="GO:0005576">
    <property type="term" value="C:extracellular region"/>
    <property type="evidence" value="ECO:0007669"/>
    <property type="project" value="UniProtKB-SubCell"/>
</dbReference>
<dbReference type="GO" id="GO:0020037">
    <property type="term" value="F:heme binding"/>
    <property type="evidence" value="ECO:0007669"/>
    <property type="project" value="InterPro"/>
</dbReference>
<dbReference type="GO" id="GO:0140825">
    <property type="term" value="F:lactoperoxidase activity"/>
    <property type="evidence" value="ECO:0007669"/>
    <property type="project" value="UniProtKB-EC"/>
</dbReference>
<dbReference type="GO" id="GO:0046872">
    <property type="term" value="F:metal ion binding"/>
    <property type="evidence" value="ECO:0007669"/>
    <property type="project" value="UniProtKB-KW"/>
</dbReference>
<dbReference type="GO" id="GO:0042744">
    <property type="term" value="P:hydrogen peroxide catabolic process"/>
    <property type="evidence" value="ECO:0007669"/>
    <property type="project" value="UniProtKB-KW"/>
</dbReference>
<dbReference type="GO" id="GO:0006979">
    <property type="term" value="P:response to oxidative stress"/>
    <property type="evidence" value="ECO:0007669"/>
    <property type="project" value="InterPro"/>
</dbReference>
<dbReference type="CDD" id="cd00693">
    <property type="entry name" value="secretory_peroxidase"/>
    <property type="match status" value="1"/>
</dbReference>
<dbReference type="FunFam" id="1.10.420.10:FF:000006">
    <property type="entry name" value="Peroxidase"/>
    <property type="match status" value="1"/>
</dbReference>
<dbReference type="FunFam" id="1.10.520.10:FF:000009">
    <property type="entry name" value="Peroxidase"/>
    <property type="match status" value="1"/>
</dbReference>
<dbReference type="Gene3D" id="1.10.520.10">
    <property type="match status" value="1"/>
</dbReference>
<dbReference type="Gene3D" id="1.10.420.10">
    <property type="entry name" value="Peroxidase, domain 2"/>
    <property type="match status" value="1"/>
</dbReference>
<dbReference type="InterPro" id="IPR002016">
    <property type="entry name" value="Haem_peroxidase"/>
</dbReference>
<dbReference type="InterPro" id="IPR010255">
    <property type="entry name" value="Haem_peroxidase_sf"/>
</dbReference>
<dbReference type="InterPro" id="IPR000823">
    <property type="entry name" value="Peroxidase_pln"/>
</dbReference>
<dbReference type="InterPro" id="IPR019794">
    <property type="entry name" value="Peroxidases_AS"/>
</dbReference>
<dbReference type="InterPro" id="IPR019793">
    <property type="entry name" value="Peroxidases_heam-ligand_BS"/>
</dbReference>
<dbReference type="InterPro" id="IPR033905">
    <property type="entry name" value="Secretory_peroxidase"/>
</dbReference>
<dbReference type="PANTHER" id="PTHR31388:SF13">
    <property type="entry name" value="PEROXIDASE 2"/>
    <property type="match status" value="1"/>
</dbReference>
<dbReference type="PANTHER" id="PTHR31388">
    <property type="entry name" value="PEROXIDASE 72-RELATED"/>
    <property type="match status" value="1"/>
</dbReference>
<dbReference type="Pfam" id="PF00141">
    <property type="entry name" value="peroxidase"/>
    <property type="match status" value="1"/>
</dbReference>
<dbReference type="PRINTS" id="PR00458">
    <property type="entry name" value="PEROXIDASE"/>
</dbReference>
<dbReference type="PRINTS" id="PR00461">
    <property type="entry name" value="PLPEROXIDASE"/>
</dbReference>
<dbReference type="SUPFAM" id="SSF48113">
    <property type="entry name" value="Heme-dependent peroxidases"/>
    <property type="match status" value="1"/>
</dbReference>
<dbReference type="PROSITE" id="PS00435">
    <property type="entry name" value="PEROXIDASE_1"/>
    <property type="match status" value="1"/>
</dbReference>
<dbReference type="PROSITE" id="PS00436">
    <property type="entry name" value="PEROXIDASE_2"/>
    <property type="match status" value="1"/>
</dbReference>
<dbReference type="PROSITE" id="PS50873">
    <property type="entry name" value="PEROXIDASE_4"/>
    <property type="match status" value="1"/>
</dbReference>
<proteinExistence type="evidence at transcript level"/>
<protein>
    <recommendedName>
        <fullName>Peroxidase 42</fullName>
        <ecNumber>1.11.1.7</ecNumber>
    </recommendedName>
    <alternativeName>
        <fullName>Plasma membrane-bound peroxidase 3-1</fullName>
        <shortName>pmPOX3-1</shortName>
    </alternativeName>
</protein>
<evidence type="ECO:0000255" key="1"/>
<evidence type="ECO:0000255" key="2">
    <source>
        <dbReference type="PROSITE-ProRule" id="PRU00297"/>
    </source>
</evidence>
<evidence type="ECO:0000255" key="3">
    <source>
        <dbReference type="PROSITE-ProRule" id="PRU10012"/>
    </source>
</evidence>
<evidence type="ECO:0000305" key="4"/>
<sequence>MATSSGSCLIISLLVVVVAAALSASTASAQLSSTFYDTSCPSAMSTISSGVNSAVAQQARVGASLLRLHFHDCFIQGCDASILLNDTSGEQTQPPNLTLNPRAFDVVNSIKAQVEAACPGVVSCADILAVAARDGVVALGGPSWTVLLGRRDSTGSFPSQTSDLPPPTSSLQALLAAYSKKNLDATDMVALSGAHTIGQAQCSSFNGHIYNDTNINAAFATSLKANCPMSGGSSLAPLDTMTPTVFGNDYYKNLLSQKGLLHSDQELFNNGSTDSTVSNFASSSAAFTSAFTAAMVKMGNLGPLTGTSGQIRLTCWKLNSS</sequence>
<accession>A5H453</accession>
<organism>
    <name type="scientific">Zea mays</name>
    <name type="common">Maize</name>
    <dbReference type="NCBI Taxonomy" id="4577"/>
    <lineage>
        <taxon>Eukaryota</taxon>
        <taxon>Viridiplantae</taxon>
        <taxon>Streptophyta</taxon>
        <taxon>Embryophyta</taxon>
        <taxon>Tracheophyta</taxon>
        <taxon>Spermatophyta</taxon>
        <taxon>Magnoliopsida</taxon>
        <taxon>Liliopsida</taxon>
        <taxon>Poales</taxon>
        <taxon>Poaceae</taxon>
        <taxon>PACMAD clade</taxon>
        <taxon>Panicoideae</taxon>
        <taxon>Andropogonodae</taxon>
        <taxon>Andropogoneae</taxon>
        <taxon>Tripsacinae</taxon>
        <taxon>Zea</taxon>
    </lineage>
</organism>
<keyword id="KW-0106">Calcium</keyword>
<keyword id="KW-1015">Disulfide bond</keyword>
<keyword id="KW-0325">Glycoprotein</keyword>
<keyword id="KW-0349">Heme</keyword>
<keyword id="KW-0376">Hydrogen peroxide</keyword>
<keyword id="KW-0408">Iron</keyword>
<keyword id="KW-0479">Metal-binding</keyword>
<keyword id="KW-0560">Oxidoreductase</keyword>
<keyword id="KW-0575">Peroxidase</keyword>
<keyword id="KW-0873">Pyrrolidone carboxylic acid</keyword>
<keyword id="KW-1185">Reference proteome</keyword>
<keyword id="KW-0964">Secreted</keyword>
<keyword id="KW-0732">Signal</keyword>